<comment type="function">
    <text evidence="1">Catalyzes the initial step of the lipid cycle reactions in the biosynthesis of the cell wall peptidoglycan: transfers peptidoglycan precursor phospho-MurNAc-pentapeptide from UDP-MurNAc-pentapeptide onto the lipid carrier undecaprenyl phosphate, yielding undecaprenyl-pyrophosphoryl-MurNAc-pentapeptide, known as lipid I.</text>
</comment>
<comment type="catalytic activity">
    <reaction evidence="1">
        <text>UDP-N-acetyl-alpha-D-muramoyl-L-alanyl-gamma-D-glutamyl-meso-2,6-diaminopimeloyl-D-alanyl-D-alanine + di-trans,octa-cis-undecaprenyl phosphate = di-trans,octa-cis-undecaprenyl diphospho-N-acetyl-alpha-D-muramoyl-L-alanyl-D-glutamyl-meso-2,6-diaminopimeloyl-D-alanyl-D-alanine + UMP</text>
        <dbReference type="Rhea" id="RHEA:28386"/>
        <dbReference type="ChEBI" id="CHEBI:57865"/>
        <dbReference type="ChEBI" id="CHEBI:60392"/>
        <dbReference type="ChEBI" id="CHEBI:61386"/>
        <dbReference type="ChEBI" id="CHEBI:61387"/>
        <dbReference type="EC" id="2.7.8.13"/>
    </reaction>
</comment>
<comment type="cofactor">
    <cofactor evidence="1">
        <name>Mg(2+)</name>
        <dbReference type="ChEBI" id="CHEBI:18420"/>
    </cofactor>
</comment>
<comment type="pathway">
    <text evidence="1">Cell wall biogenesis; peptidoglycan biosynthesis.</text>
</comment>
<comment type="subcellular location">
    <subcellularLocation>
        <location evidence="1">Cell inner membrane</location>
        <topology evidence="1">Multi-pass membrane protein</topology>
    </subcellularLocation>
</comment>
<comment type="similarity">
    <text evidence="1">Belongs to the glycosyltransferase 4 family. MraY subfamily.</text>
</comment>
<sequence>MLVWVADFLAQYFSIFSVFQYLTLRAILGVLTALLISLLVGPVMIRKLSYYQIGQAVRDDGPESHFSKAGTPTMGGALILVAIAVSTLLWADLTNRYVLITLGVTLLFGAIGWVDDWRKVVERNPKGLPARWKYFWQSVFGFGAAVLLFKTAHLPQETTLIVPFFKDITLALGVGFVLLTYFVIVGGSNAVNLTDGLDGLAIMPTVMVGGALAVFAYLSGHVKFAEYLHIPYLPGTGELVIFLGALVGAGLGFLWFNTYPAQVFMGDVGALALGAALGVVAVIVRQELVFFVMGGVFVMETVSVILQVASYKLTGRRIFRMAPLHHHFELKGWPEPRVIVRFWVITVVLVLVGLATLKIR</sequence>
<gene>
    <name evidence="1" type="primary">mraY</name>
    <name type="ordered locus">HCH_05886</name>
</gene>
<accession>Q2S9Y9</accession>
<evidence type="ECO:0000255" key="1">
    <source>
        <dbReference type="HAMAP-Rule" id="MF_00038"/>
    </source>
</evidence>
<reference key="1">
    <citation type="journal article" date="2005" name="Nucleic Acids Res.">
        <title>Genomic blueprint of Hahella chejuensis, a marine microbe producing an algicidal agent.</title>
        <authorList>
            <person name="Jeong H."/>
            <person name="Yim J.H."/>
            <person name="Lee C."/>
            <person name="Choi S.-H."/>
            <person name="Park Y.K."/>
            <person name="Yoon S.H."/>
            <person name="Hur C.-G."/>
            <person name="Kang H.-Y."/>
            <person name="Kim D."/>
            <person name="Lee H.H."/>
            <person name="Park K.H."/>
            <person name="Park S.-H."/>
            <person name="Park H.-S."/>
            <person name="Lee H.K."/>
            <person name="Oh T.K."/>
            <person name="Kim J.F."/>
        </authorList>
    </citation>
    <scope>NUCLEOTIDE SEQUENCE [LARGE SCALE GENOMIC DNA]</scope>
    <source>
        <strain>KCTC 2396</strain>
    </source>
</reference>
<proteinExistence type="inferred from homology"/>
<dbReference type="EC" id="2.7.8.13" evidence="1"/>
<dbReference type="EMBL" id="CP000155">
    <property type="protein sequence ID" value="ABC32535.1"/>
    <property type="molecule type" value="Genomic_DNA"/>
</dbReference>
<dbReference type="RefSeq" id="WP_011399594.1">
    <property type="nucleotide sequence ID" value="NC_007645.1"/>
</dbReference>
<dbReference type="SMR" id="Q2S9Y9"/>
<dbReference type="STRING" id="349521.HCH_05886"/>
<dbReference type="KEGG" id="hch:HCH_05886"/>
<dbReference type="eggNOG" id="COG0472">
    <property type="taxonomic scope" value="Bacteria"/>
</dbReference>
<dbReference type="HOGENOM" id="CLU_023982_0_0_6"/>
<dbReference type="OrthoDB" id="9805475at2"/>
<dbReference type="UniPathway" id="UPA00219"/>
<dbReference type="Proteomes" id="UP000000238">
    <property type="component" value="Chromosome"/>
</dbReference>
<dbReference type="GO" id="GO:0005886">
    <property type="term" value="C:plasma membrane"/>
    <property type="evidence" value="ECO:0007669"/>
    <property type="project" value="UniProtKB-SubCell"/>
</dbReference>
<dbReference type="GO" id="GO:0046872">
    <property type="term" value="F:metal ion binding"/>
    <property type="evidence" value="ECO:0007669"/>
    <property type="project" value="UniProtKB-KW"/>
</dbReference>
<dbReference type="GO" id="GO:0008963">
    <property type="term" value="F:phospho-N-acetylmuramoyl-pentapeptide-transferase activity"/>
    <property type="evidence" value="ECO:0007669"/>
    <property type="project" value="UniProtKB-UniRule"/>
</dbReference>
<dbReference type="GO" id="GO:0051992">
    <property type="term" value="F:UDP-N-acetylmuramoyl-L-alanyl-D-glutamyl-meso-2,6-diaminopimelyl-D-alanyl-D-alanine:undecaprenyl-phosphate transferase activity"/>
    <property type="evidence" value="ECO:0007669"/>
    <property type="project" value="RHEA"/>
</dbReference>
<dbReference type="GO" id="GO:0051301">
    <property type="term" value="P:cell division"/>
    <property type="evidence" value="ECO:0007669"/>
    <property type="project" value="UniProtKB-KW"/>
</dbReference>
<dbReference type="GO" id="GO:0071555">
    <property type="term" value="P:cell wall organization"/>
    <property type="evidence" value="ECO:0007669"/>
    <property type="project" value="UniProtKB-KW"/>
</dbReference>
<dbReference type="GO" id="GO:0009252">
    <property type="term" value="P:peptidoglycan biosynthetic process"/>
    <property type="evidence" value="ECO:0007669"/>
    <property type="project" value="UniProtKB-UniRule"/>
</dbReference>
<dbReference type="GO" id="GO:0008360">
    <property type="term" value="P:regulation of cell shape"/>
    <property type="evidence" value="ECO:0007669"/>
    <property type="project" value="UniProtKB-KW"/>
</dbReference>
<dbReference type="CDD" id="cd06852">
    <property type="entry name" value="GT_MraY"/>
    <property type="match status" value="1"/>
</dbReference>
<dbReference type="HAMAP" id="MF_00038">
    <property type="entry name" value="MraY"/>
    <property type="match status" value="1"/>
</dbReference>
<dbReference type="InterPro" id="IPR000715">
    <property type="entry name" value="Glycosyl_transferase_4"/>
</dbReference>
<dbReference type="InterPro" id="IPR003524">
    <property type="entry name" value="PNAcMuramoyl-5peptid_Trfase"/>
</dbReference>
<dbReference type="InterPro" id="IPR018480">
    <property type="entry name" value="PNAcMuramoyl-5peptid_Trfase_CS"/>
</dbReference>
<dbReference type="NCBIfam" id="TIGR00445">
    <property type="entry name" value="mraY"/>
    <property type="match status" value="1"/>
</dbReference>
<dbReference type="PANTHER" id="PTHR22926">
    <property type="entry name" value="PHOSPHO-N-ACETYLMURAMOYL-PENTAPEPTIDE-TRANSFERASE"/>
    <property type="match status" value="1"/>
</dbReference>
<dbReference type="PANTHER" id="PTHR22926:SF5">
    <property type="entry name" value="PHOSPHO-N-ACETYLMURAMOYL-PENTAPEPTIDE-TRANSFERASE HOMOLOG"/>
    <property type="match status" value="1"/>
</dbReference>
<dbReference type="Pfam" id="PF00953">
    <property type="entry name" value="Glycos_transf_4"/>
    <property type="match status" value="1"/>
</dbReference>
<dbReference type="Pfam" id="PF10555">
    <property type="entry name" value="MraY_sig1"/>
    <property type="match status" value="1"/>
</dbReference>
<dbReference type="PROSITE" id="PS01347">
    <property type="entry name" value="MRAY_1"/>
    <property type="match status" value="1"/>
</dbReference>
<dbReference type="PROSITE" id="PS01348">
    <property type="entry name" value="MRAY_2"/>
    <property type="match status" value="1"/>
</dbReference>
<protein>
    <recommendedName>
        <fullName evidence="1">Phospho-N-acetylmuramoyl-pentapeptide-transferase</fullName>
        <ecNumber evidence="1">2.7.8.13</ecNumber>
    </recommendedName>
    <alternativeName>
        <fullName evidence="1">UDP-MurNAc-pentapeptide phosphotransferase</fullName>
    </alternativeName>
</protein>
<organism>
    <name type="scientific">Hahella chejuensis (strain KCTC 2396)</name>
    <dbReference type="NCBI Taxonomy" id="349521"/>
    <lineage>
        <taxon>Bacteria</taxon>
        <taxon>Pseudomonadati</taxon>
        <taxon>Pseudomonadota</taxon>
        <taxon>Gammaproteobacteria</taxon>
        <taxon>Oceanospirillales</taxon>
        <taxon>Hahellaceae</taxon>
        <taxon>Hahella</taxon>
    </lineage>
</organism>
<name>MRAY_HAHCH</name>
<feature type="chain" id="PRO_0000235453" description="Phospho-N-acetylmuramoyl-pentapeptide-transferase">
    <location>
        <begin position="1"/>
        <end position="360"/>
    </location>
</feature>
<feature type="transmembrane region" description="Helical" evidence="1">
    <location>
        <begin position="2"/>
        <end position="22"/>
    </location>
</feature>
<feature type="transmembrane region" description="Helical" evidence="1">
    <location>
        <begin position="26"/>
        <end position="46"/>
    </location>
</feature>
<feature type="transmembrane region" description="Helical" evidence="1">
    <location>
        <begin position="73"/>
        <end position="93"/>
    </location>
</feature>
<feature type="transmembrane region" description="Helical" evidence="1">
    <location>
        <begin position="97"/>
        <end position="117"/>
    </location>
</feature>
<feature type="transmembrane region" description="Helical" evidence="1">
    <location>
        <begin position="134"/>
        <end position="154"/>
    </location>
</feature>
<feature type="transmembrane region" description="Helical" evidence="1">
    <location>
        <begin position="168"/>
        <end position="188"/>
    </location>
</feature>
<feature type="transmembrane region" description="Helical" evidence="1">
    <location>
        <begin position="199"/>
        <end position="219"/>
    </location>
</feature>
<feature type="transmembrane region" description="Helical" evidence="1">
    <location>
        <begin position="236"/>
        <end position="256"/>
    </location>
</feature>
<feature type="transmembrane region" description="Helical" evidence="1">
    <location>
        <begin position="263"/>
        <end position="283"/>
    </location>
</feature>
<feature type="transmembrane region" description="Helical" evidence="1">
    <location>
        <begin position="288"/>
        <end position="308"/>
    </location>
</feature>
<feature type="transmembrane region" description="Helical" evidence="1">
    <location>
        <begin position="339"/>
        <end position="359"/>
    </location>
</feature>
<keyword id="KW-0131">Cell cycle</keyword>
<keyword id="KW-0132">Cell division</keyword>
<keyword id="KW-0997">Cell inner membrane</keyword>
<keyword id="KW-1003">Cell membrane</keyword>
<keyword id="KW-0133">Cell shape</keyword>
<keyword id="KW-0961">Cell wall biogenesis/degradation</keyword>
<keyword id="KW-0460">Magnesium</keyword>
<keyword id="KW-0472">Membrane</keyword>
<keyword id="KW-0479">Metal-binding</keyword>
<keyword id="KW-0573">Peptidoglycan synthesis</keyword>
<keyword id="KW-1185">Reference proteome</keyword>
<keyword id="KW-0808">Transferase</keyword>
<keyword id="KW-0812">Transmembrane</keyword>
<keyword id="KW-1133">Transmembrane helix</keyword>